<protein>
    <recommendedName>
        <fullName>Putative permease HI_0125</fullName>
    </recommendedName>
</protein>
<accession>P44530</accession>
<sequence length="438" mass="45298">MPTLEKTFELKQRGSTVRQEIIAGLTTFLAMVYSVIVVPNMLGAAGFPAESVFIATCLVAGLGSILIGLWANAPMAIGCAISLTAFTAFSLVIGQKVAIPVALGAVFLMGVVFTLISTTGIRAWILRNLPSNIAHGAGIGIGLFLLLIAANGVGLVVSNQAGLPVKLGDFTSFPVMMSLIGLALIIGLEKMKIKGGILWVIIAITIVGLIFDPNVKFGGEIFKMPTFGENSLFLQLDFMGALQPAILPVVFALVMTAVFDATGTIRAVAGQADLLDKDGQIINGGKALTSDSISSLFSGLFGTAPAAVYIESAAGTAAGGKTGITAIVVGVLFLLMLFFQPLAFLVPGYATAPALMYVGLLMLSNVSKLDFDDFVGAMSGLICAVFIVLTANIVTGIMLGFAALVIGRIVSGDIKRLNVGTVIIAIVLVAFYAGGWAI</sequence>
<proteinExistence type="inferred from homology"/>
<comment type="subcellular location">
    <subcellularLocation>
        <location evidence="2">Cell membrane</location>
        <topology evidence="2">Multi-pass membrane protein</topology>
    </subcellularLocation>
</comment>
<comment type="similarity">
    <text evidence="2">Belongs to the nucleobase:cation symporter-2 (NCS2) (TC 2.A.40) family. Azg-like subfamily.</text>
</comment>
<feature type="chain" id="PRO_0000169722" description="Putative permease HI_0125">
    <location>
        <begin position="1"/>
        <end position="438"/>
    </location>
</feature>
<feature type="transmembrane region" description="Helical" evidence="1">
    <location>
        <begin position="21"/>
        <end position="41"/>
    </location>
</feature>
<feature type="transmembrane region" description="Helical" evidence="1">
    <location>
        <begin position="51"/>
        <end position="71"/>
    </location>
</feature>
<feature type="transmembrane region" description="Helical" evidence="1">
    <location>
        <begin position="73"/>
        <end position="93"/>
    </location>
</feature>
<feature type="transmembrane region" description="Helical" evidence="1">
    <location>
        <begin position="97"/>
        <end position="117"/>
    </location>
</feature>
<feature type="transmembrane region" description="Helical" evidence="1">
    <location>
        <begin position="137"/>
        <end position="157"/>
    </location>
</feature>
<feature type="transmembrane region" description="Helical" evidence="1">
    <location>
        <begin position="167"/>
        <end position="187"/>
    </location>
</feature>
<feature type="transmembrane region" description="Helical" evidence="1">
    <location>
        <begin position="195"/>
        <end position="215"/>
    </location>
</feature>
<feature type="transmembrane region" description="Helical" evidence="1">
    <location>
        <begin position="238"/>
        <end position="258"/>
    </location>
</feature>
<feature type="transmembrane region" description="Helical" evidence="1">
    <location>
        <begin position="296"/>
        <end position="316"/>
    </location>
</feature>
<feature type="transmembrane region" description="Helical" evidence="1">
    <location>
        <begin position="326"/>
        <end position="346"/>
    </location>
</feature>
<feature type="transmembrane region" description="Helical" evidence="1">
    <location>
        <begin position="347"/>
        <end position="367"/>
    </location>
</feature>
<feature type="transmembrane region" description="Helical" evidence="1">
    <location>
        <begin position="386"/>
        <end position="406"/>
    </location>
</feature>
<feature type="transmembrane region" description="Helical" evidence="1">
    <location>
        <begin position="418"/>
        <end position="438"/>
    </location>
</feature>
<feature type="binding site" evidence="1">
    <location>
        <begin position="315"/>
        <end position="322"/>
    </location>
    <ligand>
        <name>ATP</name>
        <dbReference type="ChEBI" id="CHEBI:30616"/>
    </ligand>
</feature>
<reference key="1">
    <citation type="journal article" date="1995" name="Science">
        <title>Whole-genome random sequencing and assembly of Haemophilus influenzae Rd.</title>
        <authorList>
            <person name="Fleischmann R.D."/>
            <person name="Adams M.D."/>
            <person name="White O."/>
            <person name="Clayton R.A."/>
            <person name="Kirkness E.F."/>
            <person name="Kerlavage A.R."/>
            <person name="Bult C.J."/>
            <person name="Tomb J.-F."/>
            <person name="Dougherty B.A."/>
            <person name="Merrick J.M."/>
            <person name="McKenney K."/>
            <person name="Sutton G.G."/>
            <person name="FitzHugh W."/>
            <person name="Fields C.A."/>
            <person name="Gocayne J.D."/>
            <person name="Scott J.D."/>
            <person name="Shirley R."/>
            <person name="Liu L.-I."/>
            <person name="Glodek A."/>
            <person name="Kelley J.M."/>
            <person name="Weidman J.F."/>
            <person name="Phillips C.A."/>
            <person name="Spriggs T."/>
            <person name="Hedblom E."/>
            <person name="Cotton M.D."/>
            <person name="Utterback T.R."/>
            <person name="Hanna M.C."/>
            <person name="Nguyen D.T."/>
            <person name="Saudek D.M."/>
            <person name="Brandon R.C."/>
            <person name="Fine L.D."/>
            <person name="Fritchman J.L."/>
            <person name="Fuhrmann J.L."/>
            <person name="Geoghagen N.S.M."/>
            <person name="Gnehm C.L."/>
            <person name="McDonald L.A."/>
            <person name="Small K.V."/>
            <person name="Fraser C.M."/>
            <person name="Smith H.O."/>
            <person name="Venter J.C."/>
        </authorList>
    </citation>
    <scope>NUCLEOTIDE SEQUENCE [LARGE SCALE GENOMIC DNA]</scope>
    <source>
        <strain>ATCC 51907 / DSM 11121 / KW20 / Rd</strain>
    </source>
</reference>
<keyword id="KW-0067">ATP-binding</keyword>
<keyword id="KW-1003">Cell membrane</keyword>
<keyword id="KW-0472">Membrane</keyword>
<keyword id="KW-0547">Nucleotide-binding</keyword>
<keyword id="KW-1185">Reference proteome</keyword>
<keyword id="KW-0812">Transmembrane</keyword>
<keyword id="KW-1133">Transmembrane helix</keyword>
<keyword id="KW-0813">Transport</keyword>
<name>Y125_HAEIN</name>
<evidence type="ECO:0000255" key="1"/>
<evidence type="ECO:0000305" key="2"/>
<gene>
    <name type="ordered locus">HI_0125</name>
</gene>
<organism>
    <name type="scientific">Haemophilus influenzae (strain ATCC 51907 / DSM 11121 / KW20 / Rd)</name>
    <dbReference type="NCBI Taxonomy" id="71421"/>
    <lineage>
        <taxon>Bacteria</taxon>
        <taxon>Pseudomonadati</taxon>
        <taxon>Pseudomonadota</taxon>
        <taxon>Gammaproteobacteria</taxon>
        <taxon>Pasteurellales</taxon>
        <taxon>Pasteurellaceae</taxon>
        <taxon>Haemophilus</taxon>
    </lineage>
</organism>
<dbReference type="EMBL" id="L42023">
    <property type="protein sequence ID" value="AAC21799.1"/>
    <property type="molecule type" value="Genomic_DNA"/>
</dbReference>
<dbReference type="PIR" id="C64143">
    <property type="entry name" value="C64143"/>
</dbReference>
<dbReference type="RefSeq" id="NP_438297.1">
    <property type="nucleotide sequence ID" value="NC_000907.1"/>
</dbReference>
<dbReference type="SMR" id="P44530"/>
<dbReference type="STRING" id="71421.HI_0125"/>
<dbReference type="EnsemblBacteria" id="AAC21799">
    <property type="protein sequence ID" value="AAC21799"/>
    <property type="gene ID" value="HI_0125"/>
</dbReference>
<dbReference type="KEGG" id="hin:HI_0125"/>
<dbReference type="PATRIC" id="fig|71421.8.peg.129"/>
<dbReference type="eggNOG" id="COG2252">
    <property type="taxonomic scope" value="Bacteria"/>
</dbReference>
<dbReference type="HOGENOM" id="CLU_024508_0_1_6"/>
<dbReference type="OrthoDB" id="9808458at2"/>
<dbReference type="PhylomeDB" id="P44530"/>
<dbReference type="BioCyc" id="HINF71421:G1GJ1-138-MONOMER"/>
<dbReference type="Proteomes" id="UP000000579">
    <property type="component" value="Chromosome"/>
</dbReference>
<dbReference type="GO" id="GO:0005886">
    <property type="term" value="C:plasma membrane"/>
    <property type="evidence" value="ECO:0000318"/>
    <property type="project" value="GO_Central"/>
</dbReference>
<dbReference type="GO" id="GO:0005524">
    <property type="term" value="F:ATP binding"/>
    <property type="evidence" value="ECO:0007669"/>
    <property type="project" value="UniProtKB-KW"/>
</dbReference>
<dbReference type="GO" id="GO:0015208">
    <property type="term" value="F:guanine transmembrane transporter activity"/>
    <property type="evidence" value="ECO:0000318"/>
    <property type="project" value="GO_Central"/>
</dbReference>
<dbReference type="InterPro" id="IPR045018">
    <property type="entry name" value="Azg-like"/>
</dbReference>
<dbReference type="InterPro" id="IPR006043">
    <property type="entry name" value="NCS2"/>
</dbReference>
<dbReference type="PANTHER" id="PTHR43337:SF4">
    <property type="entry name" value="GUANINE_HYPOXANTHINE PERMEASE GHXQ"/>
    <property type="match status" value="1"/>
</dbReference>
<dbReference type="PANTHER" id="PTHR43337">
    <property type="entry name" value="XANTHINE/URACIL PERMEASE C887.17-RELATED"/>
    <property type="match status" value="1"/>
</dbReference>
<dbReference type="Pfam" id="PF00860">
    <property type="entry name" value="Xan_ur_permease"/>
    <property type="match status" value="1"/>
</dbReference>